<feature type="chain" id="PRO_1000206375" description="Trp operon repressor">
    <location>
        <begin position="1"/>
        <end position="115"/>
    </location>
</feature>
<feature type="DNA-binding region" evidence="1">
    <location>
        <begin position="68"/>
        <end position="91"/>
    </location>
</feature>
<evidence type="ECO:0000255" key="1">
    <source>
        <dbReference type="HAMAP-Rule" id="MF_00475"/>
    </source>
</evidence>
<dbReference type="EMBL" id="CP001657">
    <property type="protein sequence ID" value="ACT14691.1"/>
    <property type="molecule type" value="Genomic_DNA"/>
</dbReference>
<dbReference type="RefSeq" id="WP_015841805.1">
    <property type="nucleotide sequence ID" value="NC_012917.1"/>
</dbReference>
<dbReference type="SMR" id="C6DF27"/>
<dbReference type="STRING" id="561230.PC1_3676"/>
<dbReference type="GeneID" id="67792515"/>
<dbReference type="KEGG" id="pct:PC1_3676"/>
<dbReference type="eggNOG" id="COG2973">
    <property type="taxonomic scope" value="Bacteria"/>
</dbReference>
<dbReference type="HOGENOM" id="CLU_147939_0_0_6"/>
<dbReference type="OrthoDB" id="5704033at2"/>
<dbReference type="Proteomes" id="UP000002736">
    <property type="component" value="Chromosome"/>
</dbReference>
<dbReference type="GO" id="GO:0005737">
    <property type="term" value="C:cytoplasm"/>
    <property type="evidence" value="ECO:0007669"/>
    <property type="project" value="UniProtKB-SubCell"/>
</dbReference>
<dbReference type="GO" id="GO:0003700">
    <property type="term" value="F:DNA-binding transcription factor activity"/>
    <property type="evidence" value="ECO:0007669"/>
    <property type="project" value="InterPro"/>
</dbReference>
<dbReference type="GO" id="GO:0043565">
    <property type="term" value="F:sequence-specific DNA binding"/>
    <property type="evidence" value="ECO:0007669"/>
    <property type="project" value="InterPro"/>
</dbReference>
<dbReference type="GO" id="GO:0045892">
    <property type="term" value="P:negative regulation of DNA-templated transcription"/>
    <property type="evidence" value="ECO:0007669"/>
    <property type="project" value="UniProtKB-UniRule"/>
</dbReference>
<dbReference type="FunFam" id="1.10.1270.10:FF:000001">
    <property type="entry name" value="Trp operon repressor"/>
    <property type="match status" value="1"/>
</dbReference>
<dbReference type="Gene3D" id="1.10.1270.10">
    <property type="entry name" value="TrpR-like"/>
    <property type="match status" value="1"/>
</dbReference>
<dbReference type="HAMAP" id="MF_00475">
    <property type="entry name" value="Trp_repressor"/>
    <property type="match status" value="1"/>
</dbReference>
<dbReference type="InterPro" id="IPR000831">
    <property type="entry name" value="Trp_repress"/>
</dbReference>
<dbReference type="InterPro" id="IPR013335">
    <property type="entry name" value="Trp_repress_bac"/>
</dbReference>
<dbReference type="InterPro" id="IPR010921">
    <property type="entry name" value="Trp_repressor/repl_initiator"/>
</dbReference>
<dbReference type="InterPro" id="IPR038116">
    <property type="entry name" value="TrpR-like_sf"/>
</dbReference>
<dbReference type="NCBIfam" id="TIGR01321">
    <property type="entry name" value="TrpR"/>
    <property type="match status" value="1"/>
</dbReference>
<dbReference type="PANTHER" id="PTHR38025">
    <property type="entry name" value="TRP OPERON REPRESSOR"/>
    <property type="match status" value="1"/>
</dbReference>
<dbReference type="PANTHER" id="PTHR38025:SF1">
    <property type="entry name" value="TRP OPERON REPRESSOR"/>
    <property type="match status" value="1"/>
</dbReference>
<dbReference type="Pfam" id="PF01371">
    <property type="entry name" value="Trp_repressor"/>
    <property type="match status" value="1"/>
</dbReference>
<dbReference type="PIRSF" id="PIRSF003196">
    <property type="entry name" value="Trp_repressor"/>
    <property type="match status" value="1"/>
</dbReference>
<dbReference type="SUPFAM" id="SSF48295">
    <property type="entry name" value="TrpR-like"/>
    <property type="match status" value="1"/>
</dbReference>
<reference key="1">
    <citation type="submission" date="2009-07" db="EMBL/GenBank/DDBJ databases">
        <title>Complete sequence of Pectobacterium carotovorum subsp. carotovorum PC1.</title>
        <authorList>
            <consortium name="US DOE Joint Genome Institute"/>
            <person name="Lucas S."/>
            <person name="Copeland A."/>
            <person name="Lapidus A."/>
            <person name="Glavina del Rio T."/>
            <person name="Tice H."/>
            <person name="Bruce D."/>
            <person name="Goodwin L."/>
            <person name="Pitluck S."/>
            <person name="Munk A.C."/>
            <person name="Brettin T."/>
            <person name="Detter J.C."/>
            <person name="Han C."/>
            <person name="Tapia R."/>
            <person name="Larimer F."/>
            <person name="Land M."/>
            <person name="Hauser L."/>
            <person name="Kyrpides N."/>
            <person name="Mikhailova N."/>
            <person name="Balakrishnan V."/>
            <person name="Glasner J."/>
            <person name="Perna N.T."/>
        </authorList>
    </citation>
    <scope>NUCLEOTIDE SEQUENCE [LARGE SCALE GENOMIC DNA]</scope>
    <source>
        <strain>PC1</strain>
    </source>
</reference>
<sequence>MTPLSLLDPALSEQDNEHWLRFVALLQQSIAEDLQLPLLQLLLTPDERTALGTRVRIVQELMRGEMSQRELKSELGAGIATITRGSNSLKAAPPALKSWLEAQLLSADKPLGDDA</sequence>
<accession>C6DF27</accession>
<name>TRPR_PECCP</name>
<organism>
    <name type="scientific">Pectobacterium carotovorum subsp. carotovorum (strain PC1)</name>
    <dbReference type="NCBI Taxonomy" id="561230"/>
    <lineage>
        <taxon>Bacteria</taxon>
        <taxon>Pseudomonadati</taxon>
        <taxon>Pseudomonadota</taxon>
        <taxon>Gammaproteobacteria</taxon>
        <taxon>Enterobacterales</taxon>
        <taxon>Pectobacteriaceae</taxon>
        <taxon>Pectobacterium</taxon>
    </lineage>
</organism>
<protein>
    <recommendedName>
        <fullName evidence="1">Trp operon repressor</fullName>
    </recommendedName>
</protein>
<comment type="function">
    <text evidence="1">This protein is an aporepressor. When complexed with L-tryptophan it binds the operator region of the trp operon (5'-ACTAGT-'3') and prevents the initiation of transcription. The complex also regulates trp repressor biosynthesis by binding to its regulatory region.</text>
</comment>
<comment type="subunit">
    <text evidence="1">Homodimer.</text>
</comment>
<comment type="subcellular location">
    <subcellularLocation>
        <location evidence="1">Cytoplasm</location>
    </subcellularLocation>
</comment>
<comment type="similarity">
    <text evidence="1">Belongs to the TrpR family.</text>
</comment>
<keyword id="KW-0963">Cytoplasm</keyword>
<keyword id="KW-0238">DNA-binding</keyword>
<keyword id="KW-0678">Repressor</keyword>
<keyword id="KW-0804">Transcription</keyword>
<keyword id="KW-0805">Transcription regulation</keyword>
<proteinExistence type="inferred from homology"/>
<gene>
    <name evidence="1" type="primary">trpR</name>
    <name type="ordered locus">PC1_3676</name>
</gene>